<feature type="chain" id="PRO_0000096243" description="Multiple antibiotic resistance protein MarB">
    <location>
        <begin position="1"/>
        <end position="71"/>
    </location>
</feature>
<gene>
    <name type="primary">marB</name>
    <name type="ordered locus">STM1518</name>
</gene>
<protein>
    <recommendedName>
        <fullName>Multiple antibiotic resistance protein MarB</fullName>
    </recommendedName>
</protein>
<organism>
    <name type="scientific">Salmonella typhimurium (strain LT2 / SGSC1412 / ATCC 700720)</name>
    <dbReference type="NCBI Taxonomy" id="99287"/>
    <lineage>
        <taxon>Bacteria</taxon>
        <taxon>Pseudomonadati</taxon>
        <taxon>Pseudomonadota</taxon>
        <taxon>Gammaproteobacteria</taxon>
        <taxon>Enterobacterales</taxon>
        <taxon>Enterobacteriaceae</taxon>
        <taxon>Salmonella</taxon>
    </lineage>
</organism>
<name>MARB_SALTY</name>
<dbReference type="EMBL" id="U54468">
    <property type="protein sequence ID" value="AAC44978.1"/>
    <property type="molecule type" value="Genomic_DNA"/>
</dbReference>
<dbReference type="EMBL" id="AE006468">
    <property type="protein sequence ID" value="AAL20437.1"/>
    <property type="molecule type" value="Genomic_DNA"/>
</dbReference>
<dbReference type="PIR" id="T11758">
    <property type="entry name" value="T11758"/>
</dbReference>
<dbReference type="RefSeq" id="NP_460478.1">
    <property type="nucleotide sequence ID" value="NC_003197.2"/>
</dbReference>
<dbReference type="RefSeq" id="WP_000783049.1">
    <property type="nucleotide sequence ID" value="NC_003197.2"/>
</dbReference>
<dbReference type="STRING" id="99287.STM1518"/>
<dbReference type="PaxDb" id="99287-STM1518"/>
<dbReference type="GeneID" id="1253036"/>
<dbReference type="KEGG" id="stm:STM1518"/>
<dbReference type="PATRIC" id="fig|99287.12.peg.1606"/>
<dbReference type="HOGENOM" id="CLU_194634_0_0_6"/>
<dbReference type="OMA" id="HMGAGSD"/>
<dbReference type="PhylomeDB" id="P0A214"/>
<dbReference type="BioCyc" id="SENT99287:STM1518-MONOMER"/>
<dbReference type="Proteomes" id="UP000001014">
    <property type="component" value="Chromosome"/>
</dbReference>
<dbReference type="GO" id="GO:0046677">
    <property type="term" value="P:response to antibiotic"/>
    <property type="evidence" value="ECO:0007669"/>
    <property type="project" value="UniProtKB-KW"/>
</dbReference>
<dbReference type="InterPro" id="IPR025732">
    <property type="entry name" value="MarB"/>
</dbReference>
<dbReference type="NCBIfam" id="NF007508">
    <property type="entry name" value="PRK10106.1"/>
    <property type="match status" value="1"/>
</dbReference>
<dbReference type="Pfam" id="PF13999">
    <property type="entry name" value="MarB"/>
    <property type="match status" value="1"/>
</dbReference>
<sequence>MKMLFPALPGLLLIASGYGIAEQTLLPVAQNSRDVMLLPCVGDPPNDLHPVSVNSDKSDELGVPYYNDQHL</sequence>
<keyword id="KW-0046">Antibiotic resistance</keyword>
<keyword id="KW-1185">Reference proteome</keyword>
<reference key="1">
    <citation type="journal article" date="1997" name="J. Bacteriol.">
        <title>The Salmonella typhimurium mar locus: molecular and genetic analyses and assessment of its role in virulence.</title>
        <authorList>
            <person name="Sulavik M.C."/>
            <person name="Dazer M."/>
            <person name="Miller P.F."/>
        </authorList>
    </citation>
    <scope>NUCLEOTIDE SEQUENCE [GENOMIC DNA]</scope>
    <source>
        <strain>X3181</strain>
    </source>
</reference>
<reference key="2">
    <citation type="journal article" date="2001" name="Nature">
        <title>Complete genome sequence of Salmonella enterica serovar Typhimurium LT2.</title>
        <authorList>
            <person name="McClelland M."/>
            <person name="Sanderson K.E."/>
            <person name="Spieth J."/>
            <person name="Clifton S.W."/>
            <person name="Latreille P."/>
            <person name="Courtney L."/>
            <person name="Porwollik S."/>
            <person name="Ali J."/>
            <person name="Dante M."/>
            <person name="Du F."/>
            <person name="Hou S."/>
            <person name="Layman D."/>
            <person name="Leonard S."/>
            <person name="Nguyen C."/>
            <person name="Scott K."/>
            <person name="Holmes A."/>
            <person name="Grewal N."/>
            <person name="Mulvaney E."/>
            <person name="Ryan E."/>
            <person name="Sun H."/>
            <person name="Florea L."/>
            <person name="Miller W."/>
            <person name="Stoneking T."/>
            <person name="Nhan M."/>
            <person name="Waterston R."/>
            <person name="Wilson R.K."/>
        </authorList>
    </citation>
    <scope>NUCLEOTIDE SEQUENCE [LARGE SCALE GENOMIC DNA]</scope>
    <source>
        <strain>LT2 / SGSC1412 / ATCC 700720</strain>
    </source>
</reference>
<accession>P0A214</accession>
<accession>Q56071</accession>
<proteinExistence type="predicted"/>